<gene>
    <name evidence="1" type="primary">aspS</name>
    <name type="ordered locus">MA_1684</name>
</gene>
<name>SYDND_METAC</name>
<organism>
    <name type="scientific">Methanosarcina acetivorans (strain ATCC 35395 / DSM 2834 / JCM 12185 / C2A)</name>
    <dbReference type="NCBI Taxonomy" id="188937"/>
    <lineage>
        <taxon>Archaea</taxon>
        <taxon>Methanobacteriati</taxon>
        <taxon>Methanobacteriota</taxon>
        <taxon>Stenosarchaea group</taxon>
        <taxon>Methanomicrobia</taxon>
        <taxon>Methanosarcinales</taxon>
        <taxon>Methanosarcinaceae</taxon>
        <taxon>Methanosarcina</taxon>
    </lineage>
</organism>
<evidence type="ECO:0000255" key="1">
    <source>
        <dbReference type="HAMAP-Rule" id="MF_02075"/>
    </source>
</evidence>
<dbReference type="EC" id="6.1.1.23" evidence="1"/>
<dbReference type="EMBL" id="AE010299">
    <property type="protein sequence ID" value="AAM05091.1"/>
    <property type="molecule type" value="Genomic_DNA"/>
</dbReference>
<dbReference type="RefSeq" id="WP_011021688.1">
    <property type="nucleotide sequence ID" value="NC_003552.1"/>
</dbReference>
<dbReference type="SMR" id="Q8TQ68"/>
<dbReference type="FunCoup" id="Q8TQ68">
    <property type="interactions" value="248"/>
</dbReference>
<dbReference type="STRING" id="188937.MA_1684"/>
<dbReference type="EnsemblBacteria" id="AAM05091">
    <property type="protein sequence ID" value="AAM05091"/>
    <property type="gene ID" value="MA_1684"/>
</dbReference>
<dbReference type="GeneID" id="1473572"/>
<dbReference type="KEGG" id="mac:MA_1684"/>
<dbReference type="HOGENOM" id="CLU_004553_2_1_2"/>
<dbReference type="InParanoid" id="Q8TQ68"/>
<dbReference type="OrthoDB" id="5908at2157"/>
<dbReference type="PhylomeDB" id="Q8TQ68"/>
<dbReference type="Proteomes" id="UP000002487">
    <property type="component" value="Chromosome"/>
</dbReference>
<dbReference type="GO" id="GO:0017101">
    <property type="term" value="C:aminoacyl-tRNA synthetase multienzyme complex"/>
    <property type="evidence" value="ECO:0000318"/>
    <property type="project" value="GO_Central"/>
</dbReference>
<dbReference type="GO" id="GO:0005829">
    <property type="term" value="C:cytosol"/>
    <property type="evidence" value="ECO:0000318"/>
    <property type="project" value="GO_Central"/>
</dbReference>
<dbReference type="GO" id="GO:0004815">
    <property type="term" value="F:aspartate-tRNA ligase activity"/>
    <property type="evidence" value="ECO:0000318"/>
    <property type="project" value="GO_Central"/>
</dbReference>
<dbReference type="GO" id="GO:0050560">
    <property type="term" value="F:aspartate-tRNA(Asn) ligase activity"/>
    <property type="evidence" value="ECO:0007669"/>
    <property type="project" value="UniProtKB-EC"/>
</dbReference>
<dbReference type="GO" id="GO:0005524">
    <property type="term" value="F:ATP binding"/>
    <property type="evidence" value="ECO:0007669"/>
    <property type="project" value="UniProtKB-UniRule"/>
</dbReference>
<dbReference type="GO" id="GO:0000287">
    <property type="term" value="F:magnesium ion binding"/>
    <property type="evidence" value="ECO:0007669"/>
    <property type="project" value="UniProtKB-UniRule"/>
</dbReference>
<dbReference type="GO" id="GO:0003723">
    <property type="term" value="F:RNA binding"/>
    <property type="evidence" value="ECO:0000318"/>
    <property type="project" value="GO_Central"/>
</dbReference>
<dbReference type="GO" id="GO:0006422">
    <property type="term" value="P:aspartyl-tRNA aminoacylation"/>
    <property type="evidence" value="ECO:0000318"/>
    <property type="project" value="GO_Central"/>
</dbReference>
<dbReference type="CDD" id="cd00776">
    <property type="entry name" value="AsxRS_core"/>
    <property type="match status" value="1"/>
</dbReference>
<dbReference type="CDD" id="cd04316">
    <property type="entry name" value="ND_PkAspRS_like_N"/>
    <property type="match status" value="1"/>
</dbReference>
<dbReference type="FunFam" id="3.30.930.10:FF:000038">
    <property type="entry name" value="Aspartate--tRNA ligase"/>
    <property type="match status" value="1"/>
</dbReference>
<dbReference type="FunFam" id="2.40.50.140:FF:000324">
    <property type="entry name" value="Aspartate--tRNA(Asp/Asn) ligase"/>
    <property type="match status" value="1"/>
</dbReference>
<dbReference type="Gene3D" id="3.30.930.10">
    <property type="entry name" value="Bira Bifunctional Protein, Domain 2"/>
    <property type="match status" value="1"/>
</dbReference>
<dbReference type="Gene3D" id="2.40.50.140">
    <property type="entry name" value="Nucleic acid-binding proteins"/>
    <property type="match status" value="1"/>
</dbReference>
<dbReference type="HAMAP" id="MF_02075">
    <property type="entry name" value="Asp_tRNA_synth_type2"/>
    <property type="match status" value="1"/>
</dbReference>
<dbReference type="InterPro" id="IPR004364">
    <property type="entry name" value="Aa-tRNA-synt_II"/>
</dbReference>
<dbReference type="InterPro" id="IPR006195">
    <property type="entry name" value="aa-tRNA-synth_II"/>
</dbReference>
<dbReference type="InterPro" id="IPR045864">
    <property type="entry name" value="aa-tRNA-synth_II/BPL/LPL"/>
</dbReference>
<dbReference type="InterPro" id="IPR004523">
    <property type="entry name" value="Asp-tRNA_synthase_2"/>
</dbReference>
<dbReference type="InterPro" id="IPR002312">
    <property type="entry name" value="Asp/Asn-tRNA-synth_IIb"/>
</dbReference>
<dbReference type="InterPro" id="IPR012340">
    <property type="entry name" value="NA-bd_OB-fold"/>
</dbReference>
<dbReference type="InterPro" id="IPR004365">
    <property type="entry name" value="NA-bd_OB_tRNA"/>
</dbReference>
<dbReference type="NCBIfam" id="TIGR00458">
    <property type="entry name" value="aspS_nondisc"/>
    <property type="match status" value="1"/>
</dbReference>
<dbReference type="NCBIfam" id="NF003483">
    <property type="entry name" value="PRK05159.1"/>
    <property type="match status" value="1"/>
</dbReference>
<dbReference type="PANTHER" id="PTHR43450:SF1">
    <property type="entry name" value="ASPARTATE--TRNA LIGASE, CYTOPLASMIC"/>
    <property type="match status" value="1"/>
</dbReference>
<dbReference type="PANTHER" id="PTHR43450">
    <property type="entry name" value="ASPARTYL-TRNA SYNTHETASE"/>
    <property type="match status" value="1"/>
</dbReference>
<dbReference type="Pfam" id="PF00152">
    <property type="entry name" value="tRNA-synt_2"/>
    <property type="match status" value="1"/>
</dbReference>
<dbReference type="Pfam" id="PF01336">
    <property type="entry name" value="tRNA_anti-codon"/>
    <property type="match status" value="1"/>
</dbReference>
<dbReference type="PRINTS" id="PR01042">
    <property type="entry name" value="TRNASYNTHASP"/>
</dbReference>
<dbReference type="SUPFAM" id="SSF55681">
    <property type="entry name" value="Class II aaRS and biotin synthetases"/>
    <property type="match status" value="1"/>
</dbReference>
<dbReference type="SUPFAM" id="SSF50249">
    <property type="entry name" value="Nucleic acid-binding proteins"/>
    <property type="match status" value="1"/>
</dbReference>
<dbReference type="PROSITE" id="PS50862">
    <property type="entry name" value="AA_TRNA_LIGASE_II"/>
    <property type="match status" value="1"/>
</dbReference>
<comment type="function">
    <text evidence="1">Aspartyl-tRNA synthetase with relaxed tRNA specificity since it is able to aspartylate not only its cognate tRNA(Asp) but also tRNA(Asn). Reaction proceeds in two steps: L-aspartate is first activated by ATP to form Asp-AMP and then transferred to the acceptor end of tRNA(Asp/Asn).</text>
</comment>
<comment type="catalytic activity">
    <reaction evidence="1">
        <text>tRNA(Asx) + L-aspartate + ATP = L-aspartyl-tRNA(Asx) + AMP + diphosphate</text>
        <dbReference type="Rhea" id="RHEA:18349"/>
        <dbReference type="Rhea" id="RHEA-COMP:9710"/>
        <dbReference type="Rhea" id="RHEA-COMP:9711"/>
        <dbReference type="ChEBI" id="CHEBI:29991"/>
        <dbReference type="ChEBI" id="CHEBI:30616"/>
        <dbReference type="ChEBI" id="CHEBI:33019"/>
        <dbReference type="ChEBI" id="CHEBI:78442"/>
        <dbReference type="ChEBI" id="CHEBI:78516"/>
        <dbReference type="ChEBI" id="CHEBI:456215"/>
        <dbReference type="EC" id="6.1.1.23"/>
    </reaction>
</comment>
<comment type="cofactor">
    <cofactor evidence="1">
        <name>Mg(2+)</name>
        <dbReference type="ChEBI" id="CHEBI:18420"/>
    </cofactor>
    <text evidence="1">Binds 3 Mg(2+) cations per subunit. The strongest magnesium site (Mg1) is bound to the beta- and gamma-phosphates of ATP and four water molecules complete its coordination sphere.</text>
</comment>
<comment type="subunit">
    <text evidence="1">Homodimer.</text>
</comment>
<comment type="subcellular location">
    <subcellularLocation>
        <location evidence="1">Cytoplasm</location>
    </subcellularLocation>
</comment>
<comment type="similarity">
    <text evidence="1">Belongs to the class-II aminoacyl-tRNA synthetase family. Type 2 subfamily.</text>
</comment>
<accession>Q8TQ68</accession>
<reference key="1">
    <citation type="journal article" date="2002" name="Genome Res.">
        <title>The genome of Methanosarcina acetivorans reveals extensive metabolic and physiological diversity.</title>
        <authorList>
            <person name="Galagan J.E."/>
            <person name="Nusbaum C."/>
            <person name="Roy A."/>
            <person name="Endrizzi M.G."/>
            <person name="Macdonald P."/>
            <person name="FitzHugh W."/>
            <person name="Calvo S."/>
            <person name="Engels R."/>
            <person name="Smirnov S."/>
            <person name="Atnoor D."/>
            <person name="Brown A."/>
            <person name="Allen N."/>
            <person name="Naylor J."/>
            <person name="Stange-Thomann N."/>
            <person name="DeArellano K."/>
            <person name="Johnson R."/>
            <person name="Linton L."/>
            <person name="McEwan P."/>
            <person name="McKernan K."/>
            <person name="Talamas J."/>
            <person name="Tirrell A."/>
            <person name="Ye W."/>
            <person name="Zimmer A."/>
            <person name="Barber R.D."/>
            <person name="Cann I."/>
            <person name="Graham D.E."/>
            <person name="Grahame D.A."/>
            <person name="Guss A.M."/>
            <person name="Hedderich R."/>
            <person name="Ingram-Smith C."/>
            <person name="Kuettner H.C."/>
            <person name="Krzycki J.A."/>
            <person name="Leigh J.A."/>
            <person name="Li W."/>
            <person name="Liu J."/>
            <person name="Mukhopadhyay B."/>
            <person name="Reeve J.N."/>
            <person name="Smith K."/>
            <person name="Springer T.A."/>
            <person name="Umayam L.A."/>
            <person name="White O."/>
            <person name="White R.H."/>
            <person name="de Macario E.C."/>
            <person name="Ferry J.G."/>
            <person name="Jarrell K.F."/>
            <person name="Jing H."/>
            <person name="Macario A.J.L."/>
            <person name="Paulsen I.T."/>
            <person name="Pritchett M."/>
            <person name="Sowers K.R."/>
            <person name="Swanson R.V."/>
            <person name="Zinder S.H."/>
            <person name="Lander E."/>
            <person name="Metcalf W.W."/>
            <person name="Birren B."/>
        </authorList>
    </citation>
    <scope>NUCLEOTIDE SEQUENCE [LARGE SCALE GENOMIC DNA]</scope>
    <source>
        <strain>ATCC 35395 / DSM 2834 / JCM 12185 / C2A</strain>
    </source>
</reference>
<sequence>MSLANLRTHYTAEVKPESVDNGQKITLAGWIHEVRDLGGICFVVLRDREGKAQVTLVKKKIDKELFDAARRLIRESVISVTGSVKFEEKAPNGYELLPEEIKVLNVAGSPLPMDTTGKVEAELDTRLDSRFIDLRRAETTAVFKIRHEALQAIREYFVKNKFIETATPKVVATATEGGTALFPITYFDREAFLNQSPQLFKQILMGGGFDRVFEIGPIFRAEEHDTRRHLNEATSIDVEVSFADHFDVMEILENLVAHIYTRVIENCKASLEILGVELKVPKTPFLKLTYDEVIEIVNSRCEEKMHWGDDLGTLGEHTVGNYVYETTGESHYFIIDWPTEIKPFYAMPYEDRPEFSKSFDMMHRTMELSSGAQRIHISELLKSRIESQGLNPDGFEFYLKAFEYGMPPHAGWGMGCERFVMTMLGTENIRDTVLFPRDRRRLSP</sequence>
<feature type="chain" id="PRO_0000110994" description="Aspartate--tRNA(Asp/Asn) ligase">
    <location>
        <begin position="1"/>
        <end position="444"/>
    </location>
</feature>
<feature type="region of interest" description="Aspartate" evidence="1">
    <location>
        <begin position="198"/>
        <end position="201"/>
    </location>
</feature>
<feature type="binding site" evidence="1">
    <location>
        <position position="176"/>
    </location>
    <ligand>
        <name>L-aspartate</name>
        <dbReference type="ChEBI" id="CHEBI:29991"/>
    </ligand>
</feature>
<feature type="binding site" evidence="1">
    <location>
        <begin position="220"/>
        <end position="222"/>
    </location>
    <ligand>
        <name>ATP</name>
        <dbReference type="ChEBI" id="CHEBI:30616"/>
    </ligand>
</feature>
<feature type="binding site" evidence="1">
    <location>
        <position position="220"/>
    </location>
    <ligand>
        <name>L-aspartate</name>
        <dbReference type="ChEBI" id="CHEBI:29991"/>
    </ligand>
</feature>
<feature type="binding site" evidence="1">
    <location>
        <begin position="228"/>
        <end position="230"/>
    </location>
    <ligand>
        <name>ATP</name>
        <dbReference type="ChEBI" id="CHEBI:30616"/>
    </ligand>
</feature>
<feature type="binding site" evidence="1">
    <location>
        <position position="367"/>
    </location>
    <ligand>
        <name>ATP</name>
        <dbReference type="ChEBI" id="CHEBI:30616"/>
    </ligand>
</feature>
<feature type="binding site" evidence="1">
    <location>
        <position position="367"/>
    </location>
    <ligand>
        <name>Mg(2+)</name>
        <dbReference type="ChEBI" id="CHEBI:18420"/>
        <label>2</label>
    </ligand>
</feature>
<feature type="binding site" evidence="1">
    <location>
        <position position="367"/>
    </location>
    <ligand>
        <name>Mg(2+)</name>
        <dbReference type="ChEBI" id="CHEBI:18420"/>
        <label>3</label>
    </ligand>
</feature>
<feature type="binding site" evidence="1">
    <location>
        <position position="370"/>
    </location>
    <ligand>
        <name>L-aspartate</name>
        <dbReference type="ChEBI" id="CHEBI:29991"/>
    </ligand>
</feature>
<feature type="binding site" evidence="1">
    <location>
        <position position="370"/>
    </location>
    <ligand>
        <name>Mg(2+)</name>
        <dbReference type="ChEBI" id="CHEBI:18420"/>
        <label>2</label>
    </ligand>
</feature>
<feature type="binding site" evidence="1">
    <location>
        <position position="374"/>
    </location>
    <ligand>
        <name>L-aspartate</name>
        <dbReference type="ChEBI" id="CHEBI:29991"/>
    </ligand>
</feature>
<feature type="binding site" evidence="1">
    <location>
        <begin position="415"/>
        <end position="418"/>
    </location>
    <ligand>
        <name>ATP</name>
        <dbReference type="ChEBI" id="CHEBI:30616"/>
    </ligand>
</feature>
<feature type="site" description="Important for tRNA non-discrimination" evidence="1">
    <location>
        <position position="91"/>
    </location>
</feature>
<keyword id="KW-0030">Aminoacyl-tRNA synthetase</keyword>
<keyword id="KW-0067">ATP-binding</keyword>
<keyword id="KW-0963">Cytoplasm</keyword>
<keyword id="KW-0436">Ligase</keyword>
<keyword id="KW-0460">Magnesium</keyword>
<keyword id="KW-0479">Metal-binding</keyword>
<keyword id="KW-0547">Nucleotide-binding</keyword>
<keyword id="KW-0648">Protein biosynthesis</keyword>
<keyword id="KW-1185">Reference proteome</keyword>
<protein>
    <recommendedName>
        <fullName evidence="1">Aspartate--tRNA(Asp/Asn) ligase</fullName>
        <ecNumber evidence="1">6.1.1.23</ecNumber>
    </recommendedName>
    <alternativeName>
        <fullName evidence="1">Aspartyl-tRNA synthetase</fullName>
        <shortName evidence="1">AspRS</shortName>
    </alternativeName>
    <alternativeName>
        <fullName evidence="1">Non-discriminating aspartyl-tRNA synthetase</fullName>
        <shortName evidence="1">ND-AspRS</shortName>
    </alternativeName>
</protein>
<proteinExistence type="inferred from homology"/>